<name>SYDP_VIBPA</name>
<accession>Q87RS5</accession>
<gene>
    <name evidence="1" type="primary">syd</name>
    <name type="ordered locus">VP0702</name>
</gene>
<evidence type="ECO:0000255" key="1">
    <source>
        <dbReference type="HAMAP-Rule" id="MF_01104"/>
    </source>
</evidence>
<reference key="1">
    <citation type="journal article" date="2003" name="Lancet">
        <title>Genome sequence of Vibrio parahaemolyticus: a pathogenic mechanism distinct from that of V. cholerae.</title>
        <authorList>
            <person name="Makino K."/>
            <person name="Oshima K."/>
            <person name="Kurokawa K."/>
            <person name="Yokoyama K."/>
            <person name="Uda T."/>
            <person name="Tagomori K."/>
            <person name="Iijima Y."/>
            <person name="Najima M."/>
            <person name="Nakano M."/>
            <person name="Yamashita A."/>
            <person name="Kubota Y."/>
            <person name="Kimura S."/>
            <person name="Yasunaga T."/>
            <person name="Honda T."/>
            <person name="Shinagawa H."/>
            <person name="Hattori M."/>
            <person name="Iida T."/>
        </authorList>
    </citation>
    <scope>NUCLEOTIDE SEQUENCE [LARGE SCALE GENOMIC DNA]</scope>
    <source>
        <strain>RIMD 2210633</strain>
    </source>
</reference>
<dbReference type="EMBL" id="BA000031">
    <property type="protein sequence ID" value="BAC58965.1"/>
    <property type="molecule type" value="Genomic_DNA"/>
</dbReference>
<dbReference type="RefSeq" id="NP_797081.1">
    <property type="nucleotide sequence ID" value="NC_004603.1"/>
</dbReference>
<dbReference type="RefSeq" id="WP_005459156.1">
    <property type="nucleotide sequence ID" value="NC_004603.1"/>
</dbReference>
<dbReference type="SMR" id="Q87RS5"/>
<dbReference type="GeneID" id="1188177"/>
<dbReference type="KEGG" id="vpa:VP0702"/>
<dbReference type="PATRIC" id="fig|223926.6.peg.671"/>
<dbReference type="eggNOG" id="ENOG502ZCMR">
    <property type="taxonomic scope" value="Bacteria"/>
</dbReference>
<dbReference type="HOGENOM" id="CLU_121866_0_0_6"/>
<dbReference type="Proteomes" id="UP000002493">
    <property type="component" value="Chromosome 1"/>
</dbReference>
<dbReference type="GO" id="GO:0009898">
    <property type="term" value="C:cytoplasmic side of plasma membrane"/>
    <property type="evidence" value="ECO:0007669"/>
    <property type="project" value="InterPro"/>
</dbReference>
<dbReference type="CDD" id="cd16323">
    <property type="entry name" value="Syd"/>
    <property type="match status" value="1"/>
</dbReference>
<dbReference type="Gene3D" id="3.40.1580.20">
    <property type="entry name" value="Syd protein"/>
    <property type="match status" value="1"/>
</dbReference>
<dbReference type="HAMAP" id="MF_01104">
    <property type="entry name" value="Syd"/>
    <property type="match status" value="1"/>
</dbReference>
<dbReference type="InterPro" id="IPR009948">
    <property type="entry name" value="Syd"/>
</dbReference>
<dbReference type="InterPro" id="IPR038228">
    <property type="entry name" value="Syd_sf"/>
</dbReference>
<dbReference type="NCBIfam" id="NF003439">
    <property type="entry name" value="PRK04968.1"/>
    <property type="match status" value="1"/>
</dbReference>
<dbReference type="Pfam" id="PF07348">
    <property type="entry name" value="Syd"/>
    <property type="match status" value="1"/>
</dbReference>
<feature type="chain" id="PRO_0000214148" description="Protein Syd">
    <location>
        <begin position="1"/>
        <end position="181"/>
    </location>
</feature>
<organism>
    <name type="scientific">Vibrio parahaemolyticus serotype O3:K6 (strain RIMD 2210633)</name>
    <dbReference type="NCBI Taxonomy" id="223926"/>
    <lineage>
        <taxon>Bacteria</taxon>
        <taxon>Pseudomonadati</taxon>
        <taxon>Pseudomonadota</taxon>
        <taxon>Gammaproteobacteria</taxon>
        <taxon>Vibrionales</taxon>
        <taxon>Vibrionaceae</taxon>
        <taxon>Vibrio</taxon>
    </lineage>
</organism>
<proteinExistence type="inferred from homology"/>
<comment type="function">
    <text evidence="1">Interacts with the SecY protein in vivo. May bind preferentially to an uncomplexed state of SecY, thus functioning either as a chelating agent for excess SecY in the cell or as a regulatory factor that negatively controls the translocase function.</text>
</comment>
<comment type="subcellular location">
    <subcellularLocation>
        <location evidence="1">Cell inner membrane</location>
        <topology evidence="1">Peripheral membrane protein</topology>
        <orientation evidence="1">Cytoplasmic side</orientation>
    </subcellularLocation>
    <text evidence="1">Loosely associated with the cytoplasmic side of the inner membrane, probably via SecY.</text>
</comment>
<comment type="similarity">
    <text evidence="1">Belongs to the Syd family.</text>
</comment>
<sequence>MTQTVTQALQDFSLRYQQAWQNKHNELPRNEELADLVSPCVEEKCDGAVLWKAFPREEMADFTNVENAIELTLHEDIKAFYGSQYSADMDATWQTNPLTLLQVWSDDDFVRLQENILGHLVTQRRLKLKPTVFIAATDAELDVISICNLTGNVILERLGTDKREVLAENVVEFLAKIEAAV</sequence>
<keyword id="KW-0997">Cell inner membrane</keyword>
<keyword id="KW-1003">Cell membrane</keyword>
<keyword id="KW-0472">Membrane</keyword>
<protein>
    <recommendedName>
        <fullName evidence="1">Protein Syd</fullName>
    </recommendedName>
</protein>